<gene>
    <name evidence="1" type="primary">gB</name>
    <name type="ORF">UL27</name>
</gene>
<keyword id="KW-1015">Disulfide bond</keyword>
<keyword id="KW-0325">Glycoprotein</keyword>
<keyword id="KW-1032">Host cell membrane</keyword>
<keyword id="KW-1039">Host endosome</keyword>
<keyword id="KW-1040">Host Golgi apparatus</keyword>
<keyword id="KW-1043">Host membrane</keyword>
<keyword id="KW-0945">Host-virus interaction</keyword>
<keyword id="KW-0472">Membrane</keyword>
<keyword id="KW-0732">Signal</keyword>
<keyword id="KW-0812">Transmembrane</keyword>
<keyword id="KW-1133">Transmembrane helix</keyword>
<keyword id="KW-1161">Viral attachment to host cell</keyword>
<keyword id="KW-0261">Viral envelope protein</keyword>
<keyword id="KW-0946">Virion</keyword>
<keyword id="KW-1160">Virus entry into host cell</keyword>
<organism>
    <name type="scientific">Herpesvirus ateles type 1 (strain Lennette)</name>
    <dbReference type="NCBI Taxonomy" id="35243"/>
    <lineage>
        <taxon>Viruses</taxon>
        <taxon>Duplodnaviria</taxon>
        <taxon>Heunggongvirae</taxon>
        <taxon>Peploviricota</taxon>
        <taxon>Herviviricetes</taxon>
        <taxon>Herpesvirales</taxon>
        <taxon>Orthoherpesviridae</taxon>
        <taxon>Alphaherpesvirinae</taxon>
        <taxon>Simplexvirus</taxon>
        <taxon>Simplexvirus atelinealpha1</taxon>
    </lineage>
</organism>
<organismHost>
    <name type="scientific">Ateles</name>
    <dbReference type="NCBI Taxonomy" id="9506"/>
</organismHost>
<name>GB_HSVA1</name>
<protein>
    <recommendedName>
        <fullName evidence="1">Envelope glycoprotein B</fullName>
        <shortName evidence="1">gB</shortName>
    </recommendedName>
</protein>
<evidence type="ECO:0000255" key="1">
    <source>
        <dbReference type="HAMAP-Rule" id="MF_04032"/>
    </source>
</evidence>
<evidence type="ECO:0000256" key="2">
    <source>
        <dbReference type="SAM" id="MobiDB-lite"/>
    </source>
</evidence>
<evidence type="ECO:0000305" key="3"/>
<feature type="signal peptide" evidence="1">
    <location>
        <begin position="1"/>
        <end position="36"/>
    </location>
</feature>
<feature type="chain" id="PRO_0000038181" description="Envelope glycoprotein B" evidence="1">
    <location>
        <begin position="37"/>
        <end position="933"/>
    </location>
</feature>
<feature type="topological domain" description="Virion surface" evidence="1">
    <location>
        <begin position="37"/>
        <end position="797"/>
    </location>
</feature>
<feature type="transmembrane region" description="Helical" evidence="1">
    <location>
        <begin position="798"/>
        <end position="818"/>
    </location>
</feature>
<feature type="topological domain" description="Intravirion" evidence="1">
    <location>
        <begin position="819"/>
        <end position="933"/>
    </location>
</feature>
<feature type="region of interest" description="Disordered" evidence="2">
    <location>
        <begin position="36"/>
        <end position="115"/>
    </location>
</feature>
<feature type="region of interest" description="Involved in fusion and/or binding to host membrane" evidence="1">
    <location>
        <begin position="193"/>
        <end position="199"/>
    </location>
</feature>
<feature type="region of interest" description="Involved in fusion and/or binding to host membrane" evidence="1">
    <location>
        <begin position="278"/>
        <end position="285"/>
    </location>
</feature>
<feature type="region of interest" description="Hydrophobic membrane proximal region" evidence="1">
    <location>
        <begin position="742"/>
        <end position="795"/>
    </location>
</feature>
<feature type="region of interest" description="Hydrophobic membrane proximal region">
    <location>
        <begin position="754"/>
        <end position="795"/>
    </location>
</feature>
<feature type="short sequence motif" description="Golgi targeting" evidence="1">
    <location>
        <begin position="881"/>
        <end position="884"/>
    </location>
</feature>
<feature type="short sequence motif" description="Internalization motif" evidence="1">
    <location>
        <begin position="920"/>
        <end position="923"/>
    </location>
</feature>
<feature type="compositionally biased region" description="Low complexity" evidence="2">
    <location>
        <begin position="36"/>
        <end position="49"/>
    </location>
</feature>
<feature type="compositionally biased region" description="Acidic residues" evidence="2">
    <location>
        <begin position="54"/>
        <end position="69"/>
    </location>
</feature>
<feature type="glycosylation site" description="N-linked (GlcNAc...) asparagine; by host" evidence="1">
    <location>
        <position position="107"/>
    </location>
</feature>
<feature type="glycosylation site" description="N-linked (GlcNAc...) asparagine; by host" evidence="1">
    <location>
        <position position="161"/>
    </location>
</feature>
<feature type="glycosylation site" description="N-linked (GlcNAc...) asparagine; by host" evidence="1">
    <location>
        <position position="418"/>
    </location>
</feature>
<feature type="glycosylation site" description="N-linked (GlcNAc...) asparagine; by host" evidence="1">
    <location>
        <position position="450"/>
    </location>
</feature>
<feature type="glycosylation site" description="N-linked (GlcNAc...) asparagine; by host" evidence="1">
    <location>
        <position position="697"/>
    </location>
</feature>
<feature type="glycosylation site" description="N-linked (GlcNAc...) asparagine; by host" evidence="1">
    <location>
        <position position="747"/>
    </location>
</feature>
<feature type="disulfide bond" evidence="1">
    <location>
        <begin position="136"/>
        <end position="596"/>
    </location>
</feature>
<feature type="disulfide bond" evidence="1">
    <location>
        <begin position="153"/>
        <end position="552"/>
    </location>
</feature>
<feature type="disulfide bond" evidence="1">
    <location>
        <begin position="227"/>
        <end position="291"/>
    </location>
</feature>
<feature type="disulfide bond" evidence="1">
    <location>
        <begin position="384"/>
        <end position="432"/>
    </location>
</feature>
<feature type="disulfide bond" evidence="1">
    <location>
        <begin position="619"/>
        <end position="656"/>
    </location>
</feature>
<accession>Q04463</accession>
<dbReference type="EMBL" id="M95785">
    <property type="protein sequence ID" value="AAA43839.1"/>
    <property type="molecule type" value="Genomic_DNA"/>
</dbReference>
<dbReference type="PIR" id="B48349">
    <property type="entry name" value="B48349"/>
</dbReference>
<dbReference type="SMR" id="Q04463"/>
<dbReference type="GlyCosmos" id="Q04463">
    <property type="glycosylation" value="6 sites, No reported glycans"/>
</dbReference>
<dbReference type="GO" id="GO:0044175">
    <property type="term" value="C:host cell endosome membrane"/>
    <property type="evidence" value="ECO:0007669"/>
    <property type="project" value="UniProtKB-SubCell"/>
</dbReference>
<dbReference type="GO" id="GO:0044178">
    <property type="term" value="C:host cell Golgi membrane"/>
    <property type="evidence" value="ECO:0007669"/>
    <property type="project" value="UniProtKB-SubCell"/>
</dbReference>
<dbReference type="GO" id="GO:0020002">
    <property type="term" value="C:host cell plasma membrane"/>
    <property type="evidence" value="ECO:0007669"/>
    <property type="project" value="UniProtKB-SubCell"/>
</dbReference>
<dbReference type="GO" id="GO:0016020">
    <property type="term" value="C:membrane"/>
    <property type="evidence" value="ECO:0007669"/>
    <property type="project" value="UniProtKB-KW"/>
</dbReference>
<dbReference type="GO" id="GO:0019031">
    <property type="term" value="C:viral envelope"/>
    <property type="evidence" value="ECO:0007669"/>
    <property type="project" value="UniProtKB-KW"/>
</dbReference>
<dbReference type="GO" id="GO:0055036">
    <property type="term" value="C:virion membrane"/>
    <property type="evidence" value="ECO:0007669"/>
    <property type="project" value="UniProtKB-SubCell"/>
</dbReference>
<dbReference type="GO" id="GO:0046718">
    <property type="term" value="P:symbiont entry into host cell"/>
    <property type="evidence" value="ECO:0007669"/>
    <property type="project" value="UniProtKB-KW"/>
</dbReference>
<dbReference type="GO" id="GO:0019062">
    <property type="term" value="P:virion attachment to host cell"/>
    <property type="evidence" value="ECO:0007669"/>
    <property type="project" value="UniProtKB-KW"/>
</dbReference>
<dbReference type="FunFam" id="2.30.30.1230:FF:000001">
    <property type="entry name" value="Envelope glycoprotein B"/>
    <property type="match status" value="1"/>
</dbReference>
<dbReference type="Gene3D" id="1.20.5.1890">
    <property type="match status" value="1"/>
</dbReference>
<dbReference type="Gene3D" id="2.30.29.100">
    <property type="match status" value="1"/>
</dbReference>
<dbReference type="Gene3D" id="2.30.30.1230">
    <property type="match status" value="1"/>
</dbReference>
<dbReference type="Gene3D" id="6.10.250.3280">
    <property type="match status" value="1"/>
</dbReference>
<dbReference type="HAMAP" id="MF_04032">
    <property type="entry name" value="HSV_GB"/>
    <property type="match status" value="1"/>
</dbReference>
<dbReference type="InterPro" id="IPR035377">
    <property type="entry name" value="Glycoprot_B_PH1"/>
</dbReference>
<dbReference type="InterPro" id="IPR035381">
    <property type="entry name" value="Glycoprot_B_PH2"/>
</dbReference>
<dbReference type="InterPro" id="IPR038631">
    <property type="entry name" value="Glycoprot_B_PH2_sf"/>
</dbReference>
<dbReference type="InterPro" id="IPR055341">
    <property type="entry name" value="Glycoprotein_B_ecto_C"/>
</dbReference>
<dbReference type="InterPro" id="IPR000234">
    <property type="entry name" value="Herpes_Glycoprot_B"/>
</dbReference>
<dbReference type="Pfam" id="PF17416">
    <property type="entry name" value="Glycoprot_B_PH1"/>
    <property type="match status" value="1"/>
</dbReference>
<dbReference type="Pfam" id="PF17417">
    <property type="entry name" value="Glycoprot_B_PH2"/>
    <property type="match status" value="1"/>
</dbReference>
<dbReference type="Pfam" id="PF00606">
    <property type="entry name" value="Glycoprotein_B"/>
    <property type="match status" value="1"/>
</dbReference>
<dbReference type="SUPFAM" id="SSF161008">
    <property type="entry name" value="Viral glycoprotein ectodomain-like"/>
    <property type="match status" value="1"/>
</dbReference>
<comment type="function">
    <text evidence="1">Envelope glycoprotein that forms spikes at the surface of virion envelope. Essential for the initial attachment to heparan sulfate moieties of the host cell surface proteoglycans. Involved in fusion of viral and cellular membranes leading to virus entry into the host cell. Following initial binding to its host receptors, membrane fusion is mediated by the fusion machinery composed at least of gB and the heterodimer gH/gL. May be involved in the fusion between the virion envelope and the outer nuclear membrane during virion egress.</text>
</comment>
<comment type="subunit">
    <text evidence="1">Homotrimer; disulfide-linked. Binds to heparan sulfate proteoglycans. Interacts with gH/gL heterodimer.</text>
</comment>
<comment type="subcellular location">
    <subcellularLocation>
        <location evidence="1">Virion membrane</location>
        <topology evidence="1">Single-pass type I membrane protein</topology>
    </subcellularLocation>
    <subcellularLocation>
        <location evidence="1">Host cell membrane</location>
        <topology evidence="1">Single-pass type I membrane protein</topology>
    </subcellularLocation>
    <subcellularLocation>
        <location evidence="1">Host endosome membrane</location>
        <topology evidence="1">Single-pass type I membrane protein</topology>
    </subcellularLocation>
    <subcellularLocation>
        <location evidence="1">Host Golgi apparatus membrane</location>
        <topology evidence="1">Single-pass type I membrane protein</topology>
    </subcellularLocation>
    <text evidence="1">During virion morphogenesis, this protein probably accumulates in the endosomes and trans-Golgi where secondary envelopment occurs. It is probably transported to the cell surface from where it is endocytosed and directed to the trans-Golgi network (TGN).</text>
</comment>
<comment type="similarity">
    <text evidence="1">Belongs to the herpesviridae glycoprotein B family.</text>
</comment>
<comment type="caution">
    <text evidence="3">It is uncertain whether Met-1 or Met-30 is the initiator.</text>
</comment>
<sequence length="933" mass="101492">MPRPRPRALRGSSPGWALVAAVAVGAALLMATLAVAAPPGPRGPAARSPGLEDASVEPVEDGDYDEYDDEGHTPTDVPGSGPESPGPDRPPRGPGGGSGRRRGSPGNGTRSAARRQLRESLRRIQAEYAASAFYVCPPPTGATVVQFEEPRPCPDVAAGKNFTEGIAVVFKENIAPYKFTATKYYKEITVSQTWQGSRYLQLTGLYNDRAPVPFSEITDLINGKGRCRSDVTYTRSQRRVTAYDGDEWGREVALVPAKTSTPNSRGWYTTDRVYAPNAHAGFYKTGTTVNCIVEEMEARSAFPYDSFVLATGEFVYASPFSGFSEDARRERNRYAPDRFRQVDGFYPRDLDSGQRAATPVVRNLLTTPTFTVGWDWKPKRPNVCSVTKWQVVEEMVRAEYGSAFRFTSAALSATFTSNLTQYPPELIEHSDCVAREAAESIEAIYARRYNASHVRVGGVQYYLAAGGFLLAFQPLLSNSLAEMYRREALLGRSGDLAAALAPPPVAAPASGAGPRGTISTTQTVEFARLQFTYDHIQKHVNEMLGRIAAAWCQLQNQELVLWNEARKLNPGAIASATVGTRVGARMLGDVMAVSTCIPVSPDNVIMQNSMRIPGDPKTCYARPLVSFRYTDEGELVEGQLGEDNEIRLEQNNVEPCTVGHKRYFVFGGGYVYFEEYAYSHQVSRADVPVVSTFVDLNLTMLEDHEFLPLEVYTRREIKDSGLLDYAEVQRRNQLHALRFSDIDRIMNDSANAALMAGLARFFDGMGDAGKAIGRAVLGVTEGLISVVSGVSSFLSNPFGALAVGLLVLAGLVAAFFAMRYIMRLRANPMRALYPLTTSGIKAEARAALGSGGDKGGAGDGAAGVEDFDEAKLEAARDMIRYMTLVSAMERTAHKAKKRGTSARISAHLTDMVLAAQGAEYQPLSKDDEDGADP</sequence>
<proteinExistence type="inferred from homology"/>
<reference key="1">
    <citation type="journal article" date="1993" name="Arch. Virol.">
        <title>Sequence analysis of herpes simplex virus gB gene homologs of two platyrrhine monkey alpha-herpesviruses.</title>
        <authorList>
            <person name="Eberle R."/>
            <person name="Black D."/>
        </authorList>
    </citation>
    <scope>NUCLEOTIDE SEQUENCE [GENOMIC DNA]</scope>
</reference>